<evidence type="ECO:0000250" key="1">
    <source>
        <dbReference type="UniProtKB" id="Q9BSY9"/>
    </source>
</evidence>
<evidence type="ECO:0000255" key="2">
    <source>
        <dbReference type="PROSITE-ProRule" id="PRU01205"/>
    </source>
</evidence>
<evidence type="ECO:0000269" key="3">
    <source>
    </source>
</evidence>
<evidence type="ECO:0000305" key="4"/>
<keyword id="KW-0963">Cytoplasm</keyword>
<keyword id="KW-0378">Hydrolase</keyword>
<keyword id="KW-0645">Protease</keyword>
<keyword id="KW-1185">Reference proteome</keyword>
<keyword id="KW-0833">Ubl conjugation pathway</keyword>
<dbReference type="EC" id="3.4.19.12" evidence="1"/>
<dbReference type="EC" id="3.1.2.22" evidence="1"/>
<dbReference type="EMBL" id="AK020014">
    <property type="protein sequence ID" value="BAB31967.1"/>
    <property type="molecule type" value="mRNA"/>
</dbReference>
<dbReference type="EMBL" id="AK049579">
    <property type="protein sequence ID" value="BAC33822.1"/>
    <property type="molecule type" value="mRNA"/>
</dbReference>
<dbReference type="EMBL" id="AK160733">
    <property type="protein sequence ID" value="BAE35977.1"/>
    <property type="molecule type" value="mRNA"/>
</dbReference>
<dbReference type="EMBL" id="BC002200">
    <property type="protein sequence ID" value="AAH02200.1"/>
    <property type="molecule type" value="mRNA"/>
</dbReference>
<dbReference type="EMBL" id="BC046816">
    <property type="protein sequence ID" value="AAH46816.1"/>
    <property type="molecule type" value="mRNA"/>
</dbReference>
<dbReference type="CCDS" id="CCDS35803.1"/>
<dbReference type="RefSeq" id="NP_077244.1">
    <property type="nucleotide sequence ID" value="NM_024282.3"/>
</dbReference>
<dbReference type="SMR" id="Q9D291"/>
<dbReference type="BioGRID" id="219660">
    <property type="interactions" value="2"/>
</dbReference>
<dbReference type="FunCoup" id="Q9D291">
    <property type="interactions" value="2248"/>
</dbReference>
<dbReference type="STRING" id="10090.ENSMUSP00000027783"/>
<dbReference type="MEROPS" id="C97.002"/>
<dbReference type="iPTMnet" id="Q9D291"/>
<dbReference type="PhosphoSitePlus" id="Q9D291"/>
<dbReference type="SwissPalm" id="Q9D291"/>
<dbReference type="PaxDb" id="10090-ENSMUSP00000027783"/>
<dbReference type="ProteomicsDB" id="279629"/>
<dbReference type="Pumba" id="Q9D291"/>
<dbReference type="Antibodypedia" id="34714">
    <property type="antibodies" value="112 antibodies from 30 providers"/>
</dbReference>
<dbReference type="DNASU" id="78825"/>
<dbReference type="Ensembl" id="ENSMUST00000027783.14">
    <property type="protein sequence ID" value="ENSMUSP00000027783.8"/>
    <property type="gene ID" value="ENSMUSG00000026502.14"/>
</dbReference>
<dbReference type="GeneID" id="78825"/>
<dbReference type="KEGG" id="mmu:78825"/>
<dbReference type="UCSC" id="uc007dux.1">
    <property type="organism name" value="mouse"/>
</dbReference>
<dbReference type="AGR" id="MGI:1926075"/>
<dbReference type="CTD" id="51029"/>
<dbReference type="MGI" id="MGI:1926075">
    <property type="gene designation" value="Desi2"/>
</dbReference>
<dbReference type="VEuPathDB" id="HostDB:ENSMUSG00000026502"/>
<dbReference type="eggNOG" id="KOG0324">
    <property type="taxonomic scope" value="Eukaryota"/>
</dbReference>
<dbReference type="GeneTree" id="ENSGT00730000111005"/>
<dbReference type="InParanoid" id="Q9D291"/>
<dbReference type="OMA" id="VYWTKPG"/>
<dbReference type="OrthoDB" id="412286at2759"/>
<dbReference type="PhylomeDB" id="Q9D291"/>
<dbReference type="TreeFam" id="TF313188"/>
<dbReference type="BioGRID-ORCS" id="78825">
    <property type="hits" value="1 hit in 75 CRISPR screens"/>
</dbReference>
<dbReference type="ChiTaRS" id="Desi2">
    <property type="organism name" value="mouse"/>
</dbReference>
<dbReference type="PRO" id="PR:Q9D291"/>
<dbReference type="Proteomes" id="UP000000589">
    <property type="component" value="Chromosome 1"/>
</dbReference>
<dbReference type="RNAct" id="Q9D291">
    <property type="molecule type" value="protein"/>
</dbReference>
<dbReference type="Bgee" id="ENSMUSG00000026502">
    <property type="expression patterns" value="Expressed in animal zygote and 64 other cell types or tissues"/>
</dbReference>
<dbReference type="ExpressionAtlas" id="Q9D291">
    <property type="expression patterns" value="baseline and differential"/>
</dbReference>
<dbReference type="GO" id="GO:0005737">
    <property type="term" value="C:cytoplasm"/>
    <property type="evidence" value="ECO:0000314"/>
    <property type="project" value="UniProtKB"/>
</dbReference>
<dbReference type="GO" id="GO:0004843">
    <property type="term" value="F:cysteine-type deubiquitinase activity"/>
    <property type="evidence" value="ECO:0007669"/>
    <property type="project" value="UniProtKB-EC"/>
</dbReference>
<dbReference type="GO" id="GO:1990380">
    <property type="term" value="F:K48-linked deubiquitinase activity"/>
    <property type="evidence" value="ECO:0000250"/>
    <property type="project" value="UniProtKB"/>
</dbReference>
<dbReference type="GO" id="GO:0061578">
    <property type="term" value="F:K63-linked deubiquitinase activity"/>
    <property type="evidence" value="ECO:0000250"/>
    <property type="project" value="UniProtKB"/>
</dbReference>
<dbReference type="GO" id="GO:0052816">
    <property type="term" value="F:long-chain fatty acyl-CoA hydrolase activity"/>
    <property type="evidence" value="ECO:0000250"/>
    <property type="project" value="UniProtKB"/>
</dbReference>
<dbReference type="GO" id="GO:0008474">
    <property type="term" value="F:palmitoyl-(protein) hydrolase activity"/>
    <property type="evidence" value="ECO:0007669"/>
    <property type="project" value="RHEA"/>
</dbReference>
<dbReference type="GO" id="GO:0006508">
    <property type="term" value="P:proteolysis"/>
    <property type="evidence" value="ECO:0007669"/>
    <property type="project" value="UniProtKB-KW"/>
</dbReference>
<dbReference type="FunFam" id="3.90.1720.30:FF:000001">
    <property type="entry name" value="desumoylating isopeptidase 2"/>
    <property type="match status" value="1"/>
</dbReference>
<dbReference type="Gene3D" id="3.90.1720.30">
    <property type="entry name" value="PPPDE domains"/>
    <property type="match status" value="1"/>
</dbReference>
<dbReference type="InterPro" id="IPR008580">
    <property type="entry name" value="PPPDE_dom"/>
</dbReference>
<dbReference type="InterPro" id="IPR042266">
    <property type="entry name" value="PPPDE_sf"/>
</dbReference>
<dbReference type="PANTHER" id="PTHR12378">
    <property type="entry name" value="DESUMOYLATING ISOPEPTIDASE"/>
    <property type="match status" value="1"/>
</dbReference>
<dbReference type="PANTHER" id="PTHR12378:SF6">
    <property type="entry name" value="DEUBIQUITINASE DESI2"/>
    <property type="match status" value="1"/>
</dbReference>
<dbReference type="Pfam" id="PF05903">
    <property type="entry name" value="Peptidase_C97"/>
    <property type="match status" value="1"/>
</dbReference>
<dbReference type="SMART" id="SM01179">
    <property type="entry name" value="DUF862"/>
    <property type="match status" value="1"/>
</dbReference>
<dbReference type="PROSITE" id="PS51858">
    <property type="entry name" value="PPPDE"/>
    <property type="match status" value="1"/>
</dbReference>
<sequence>MGANQLVVLNVYDMYWMNEYTSSIGIGVFHSGIEVYGREFAYGGHPYPFSGIFEISPGNASELGETFKFKEAVVLGSTDFLEDDIEKIVEELGKEYKGNAYHLMHKNCNHFSSALSEILCGKEIPRWINRLAYFSSCIPFLQSCLPKEWLTPAALQSSVSQELQDELEEAEDAAASSAMASAAAGARTGRHTKL</sequence>
<proteinExistence type="evidence at protein level"/>
<accession>Q9D291</accession>
<accession>Q3TUJ4</accession>
<gene>
    <name type="primary">Desi2</name>
    <name type="synonym">Fam152a</name>
    <name type="synonym">Pppde1</name>
</gene>
<comment type="function">
    <text evidence="1">Has deubiquitinating activity towards 'Lys-48'- and 'Lys-63'-linked polyubiquitin chains. Deubiquitinates 'Lys-48'-linked polyubiquitination of RPS7 leading to its stabilization. Exhibits palmitoyl protein thioesterase (S-depalmitoylation) activity towards synthetic substrates 4-methylumbelliferyl-6-S-palmitoyl-beta-D-glucopyranoside and S-depalmitoylation probe 5 (DPP-5).</text>
</comment>
<comment type="catalytic activity">
    <reaction evidence="1">
        <text>Thiol-dependent hydrolysis of ester, thioester, amide, peptide and isopeptide bonds formed by the C-terminal Gly of ubiquitin (a 76-residue protein attached to proteins as an intracellular targeting signal).</text>
        <dbReference type="EC" id="3.4.19.12"/>
    </reaction>
</comment>
<comment type="catalytic activity">
    <reaction evidence="1">
        <text>S-hexadecanoyl-L-cysteinyl-[protein] + H2O = L-cysteinyl-[protein] + hexadecanoate + H(+)</text>
        <dbReference type="Rhea" id="RHEA:19233"/>
        <dbReference type="Rhea" id="RHEA-COMP:10131"/>
        <dbReference type="Rhea" id="RHEA-COMP:11032"/>
        <dbReference type="ChEBI" id="CHEBI:7896"/>
        <dbReference type="ChEBI" id="CHEBI:15377"/>
        <dbReference type="ChEBI" id="CHEBI:15378"/>
        <dbReference type="ChEBI" id="CHEBI:29950"/>
        <dbReference type="ChEBI" id="CHEBI:74151"/>
        <dbReference type="EC" id="3.1.2.22"/>
    </reaction>
    <physiologicalReaction direction="left-to-right" evidence="1">
        <dbReference type="Rhea" id="RHEA:19234"/>
    </physiologicalReaction>
</comment>
<comment type="subunit">
    <text evidence="1">Interacts with RPS7.</text>
</comment>
<comment type="subcellular location">
    <subcellularLocation>
        <location evidence="3">Cytoplasm</location>
    </subcellularLocation>
</comment>
<comment type="tissue specificity">
    <text evidence="3">Widely expressed.</text>
</comment>
<comment type="similarity">
    <text evidence="4">Belongs to the DeSI family.</text>
</comment>
<organism>
    <name type="scientific">Mus musculus</name>
    <name type="common">Mouse</name>
    <dbReference type="NCBI Taxonomy" id="10090"/>
    <lineage>
        <taxon>Eukaryota</taxon>
        <taxon>Metazoa</taxon>
        <taxon>Chordata</taxon>
        <taxon>Craniata</taxon>
        <taxon>Vertebrata</taxon>
        <taxon>Euteleostomi</taxon>
        <taxon>Mammalia</taxon>
        <taxon>Eutheria</taxon>
        <taxon>Euarchontoglires</taxon>
        <taxon>Glires</taxon>
        <taxon>Rodentia</taxon>
        <taxon>Myomorpha</taxon>
        <taxon>Muroidea</taxon>
        <taxon>Muridae</taxon>
        <taxon>Murinae</taxon>
        <taxon>Mus</taxon>
        <taxon>Mus</taxon>
    </lineage>
</organism>
<feature type="chain" id="PRO_0000221631" description="Deubiquitinase DESI2">
    <location>
        <begin position="1"/>
        <end position="194"/>
    </location>
</feature>
<feature type="domain" description="PPPDE" evidence="2">
    <location>
        <begin position="5"/>
        <end position="149"/>
    </location>
</feature>
<feature type="active site" evidence="2">
    <location>
        <position position="30"/>
    </location>
</feature>
<feature type="active site" evidence="1 2">
    <location>
        <position position="108"/>
    </location>
</feature>
<name>DESI2_MOUSE</name>
<reference key="1">
    <citation type="journal article" date="2005" name="Science">
        <title>The transcriptional landscape of the mammalian genome.</title>
        <authorList>
            <person name="Carninci P."/>
            <person name="Kasukawa T."/>
            <person name="Katayama S."/>
            <person name="Gough J."/>
            <person name="Frith M.C."/>
            <person name="Maeda N."/>
            <person name="Oyama R."/>
            <person name="Ravasi T."/>
            <person name="Lenhard B."/>
            <person name="Wells C."/>
            <person name="Kodzius R."/>
            <person name="Shimokawa K."/>
            <person name="Bajic V.B."/>
            <person name="Brenner S.E."/>
            <person name="Batalov S."/>
            <person name="Forrest A.R."/>
            <person name="Zavolan M."/>
            <person name="Davis M.J."/>
            <person name="Wilming L.G."/>
            <person name="Aidinis V."/>
            <person name="Allen J.E."/>
            <person name="Ambesi-Impiombato A."/>
            <person name="Apweiler R."/>
            <person name="Aturaliya R.N."/>
            <person name="Bailey T.L."/>
            <person name="Bansal M."/>
            <person name="Baxter L."/>
            <person name="Beisel K.W."/>
            <person name="Bersano T."/>
            <person name="Bono H."/>
            <person name="Chalk A.M."/>
            <person name="Chiu K.P."/>
            <person name="Choudhary V."/>
            <person name="Christoffels A."/>
            <person name="Clutterbuck D.R."/>
            <person name="Crowe M.L."/>
            <person name="Dalla E."/>
            <person name="Dalrymple B.P."/>
            <person name="de Bono B."/>
            <person name="Della Gatta G."/>
            <person name="di Bernardo D."/>
            <person name="Down T."/>
            <person name="Engstrom P."/>
            <person name="Fagiolini M."/>
            <person name="Faulkner G."/>
            <person name="Fletcher C.F."/>
            <person name="Fukushima T."/>
            <person name="Furuno M."/>
            <person name="Futaki S."/>
            <person name="Gariboldi M."/>
            <person name="Georgii-Hemming P."/>
            <person name="Gingeras T.R."/>
            <person name="Gojobori T."/>
            <person name="Green R.E."/>
            <person name="Gustincich S."/>
            <person name="Harbers M."/>
            <person name="Hayashi Y."/>
            <person name="Hensch T.K."/>
            <person name="Hirokawa N."/>
            <person name="Hill D."/>
            <person name="Huminiecki L."/>
            <person name="Iacono M."/>
            <person name="Ikeo K."/>
            <person name="Iwama A."/>
            <person name="Ishikawa T."/>
            <person name="Jakt M."/>
            <person name="Kanapin A."/>
            <person name="Katoh M."/>
            <person name="Kawasawa Y."/>
            <person name="Kelso J."/>
            <person name="Kitamura H."/>
            <person name="Kitano H."/>
            <person name="Kollias G."/>
            <person name="Krishnan S.P."/>
            <person name="Kruger A."/>
            <person name="Kummerfeld S.K."/>
            <person name="Kurochkin I.V."/>
            <person name="Lareau L.F."/>
            <person name="Lazarevic D."/>
            <person name="Lipovich L."/>
            <person name="Liu J."/>
            <person name="Liuni S."/>
            <person name="McWilliam S."/>
            <person name="Madan Babu M."/>
            <person name="Madera M."/>
            <person name="Marchionni L."/>
            <person name="Matsuda H."/>
            <person name="Matsuzawa S."/>
            <person name="Miki H."/>
            <person name="Mignone F."/>
            <person name="Miyake S."/>
            <person name="Morris K."/>
            <person name="Mottagui-Tabar S."/>
            <person name="Mulder N."/>
            <person name="Nakano N."/>
            <person name="Nakauchi H."/>
            <person name="Ng P."/>
            <person name="Nilsson R."/>
            <person name="Nishiguchi S."/>
            <person name="Nishikawa S."/>
            <person name="Nori F."/>
            <person name="Ohara O."/>
            <person name="Okazaki Y."/>
            <person name="Orlando V."/>
            <person name="Pang K.C."/>
            <person name="Pavan W.J."/>
            <person name="Pavesi G."/>
            <person name="Pesole G."/>
            <person name="Petrovsky N."/>
            <person name="Piazza S."/>
            <person name="Reed J."/>
            <person name="Reid J.F."/>
            <person name="Ring B.Z."/>
            <person name="Ringwald M."/>
            <person name="Rost B."/>
            <person name="Ruan Y."/>
            <person name="Salzberg S.L."/>
            <person name="Sandelin A."/>
            <person name="Schneider C."/>
            <person name="Schoenbach C."/>
            <person name="Sekiguchi K."/>
            <person name="Semple C.A."/>
            <person name="Seno S."/>
            <person name="Sessa L."/>
            <person name="Sheng Y."/>
            <person name="Shibata Y."/>
            <person name="Shimada H."/>
            <person name="Shimada K."/>
            <person name="Silva D."/>
            <person name="Sinclair B."/>
            <person name="Sperling S."/>
            <person name="Stupka E."/>
            <person name="Sugiura K."/>
            <person name="Sultana R."/>
            <person name="Takenaka Y."/>
            <person name="Taki K."/>
            <person name="Tammoja K."/>
            <person name="Tan S.L."/>
            <person name="Tang S."/>
            <person name="Taylor M.S."/>
            <person name="Tegner J."/>
            <person name="Teichmann S.A."/>
            <person name="Ueda H.R."/>
            <person name="van Nimwegen E."/>
            <person name="Verardo R."/>
            <person name="Wei C.L."/>
            <person name="Yagi K."/>
            <person name="Yamanishi H."/>
            <person name="Zabarovsky E."/>
            <person name="Zhu S."/>
            <person name="Zimmer A."/>
            <person name="Hide W."/>
            <person name="Bult C."/>
            <person name="Grimmond S.M."/>
            <person name="Teasdale R.D."/>
            <person name="Liu E.T."/>
            <person name="Brusic V."/>
            <person name="Quackenbush J."/>
            <person name="Wahlestedt C."/>
            <person name="Mattick J.S."/>
            <person name="Hume D.A."/>
            <person name="Kai C."/>
            <person name="Sasaki D."/>
            <person name="Tomaru Y."/>
            <person name="Fukuda S."/>
            <person name="Kanamori-Katayama M."/>
            <person name="Suzuki M."/>
            <person name="Aoki J."/>
            <person name="Arakawa T."/>
            <person name="Iida J."/>
            <person name="Imamura K."/>
            <person name="Itoh M."/>
            <person name="Kato T."/>
            <person name="Kawaji H."/>
            <person name="Kawagashira N."/>
            <person name="Kawashima T."/>
            <person name="Kojima M."/>
            <person name="Kondo S."/>
            <person name="Konno H."/>
            <person name="Nakano K."/>
            <person name="Ninomiya N."/>
            <person name="Nishio T."/>
            <person name="Okada M."/>
            <person name="Plessy C."/>
            <person name="Shibata K."/>
            <person name="Shiraki T."/>
            <person name="Suzuki S."/>
            <person name="Tagami M."/>
            <person name="Waki K."/>
            <person name="Watahiki A."/>
            <person name="Okamura-Oho Y."/>
            <person name="Suzuki H."/>
            <person name="Kawai J."/>
            <person name="Hayashizaki Y."/>
        </authorList>
    </citation>
    <scope>NUCLEOTIDE SEQUENCE [LARGE SCALE MRNA]</scope>
    <source>
        <strain>C57BL/6J</strain>
        <tissue>Head</tissue>
        <tissue>Thymus</tissue>
    </source>
</reference>
<reference key="2">
    <citation type="journal article" date="2004" name="Genome Res.">
        <title>The status, quality, and expansion of the NIH full-length cDNA project: the Mammalian Gene Collection (MGC).</title>
        <authorList>
            <consortium name="The MGC Project Team"/>
        </authorList>
    </citation>
    <scope>NUCLEOTIDE SEQUENCE [LARGE SCALE MRNA]</scope>
    <source>
        <strain>C57BL/6J</strain>
        <strain>FVB/N</strain>
        <tissue>Brain</tissue>
        <tissue>Mammary tumor</tissue>
    </source>
</reference>
<reference key="3">
    <citation type="journal article" date="2010" name="Cell">
        <title>A tissue-specific atlas of mouse protein phosphorylation and expression.</title>
        <authorList>
            <person name="Huttlin E.L."/>
            <person name="Jedrychowski M.P."/>
            <person name="Elias J.E."/>
            <person name="Goswami T."/>
            <person name="Rad R."/>
            <person name="Beausoleil S.A."/>
            <person name="Villen J."/>
            <person name="Haas W."/>
            <person name="Sowa M.E."/>
            <person name="Gygi S.P."/>
        </authorList>
    </citation>
    <scope>IDENTIFICATION BY MASS SPECTROMETRY [LARGE SCALE ANALYSIS]</scope>
    <source>
        <tissue>Brain</tissue>
        <tissue>Brown adipose tissue</tissue>
        <tissue>Heart</tissue>
        <tissue>Kidney</tissue>
        <tissue>Lung</tissue>
        <tissue>Pancreas</tissue>
        <tissue>Spleen</tissue>
        <tissue>Testis</tissue>
    </source>
</reference>
<reference key="4">
    <citation type="journal article" date="2012" name="EMBO Rep.">
        <title>DeSUMOylating isopeptidase: a second class of SUMO protease.</title>
        <authorList>
            <person name="Shin E.J."/>
            <person name="Shin H.M."/>
            <person name="Nam E."/>
            <person name="Kim W.S."/>
            <person name="Kim J.H."/>
            <person name="Oh B.H."/>
            <person name="Yun Y."/>
        </authorList>
    </citation>
    <scope>SUBCELLULAR LOCATION</scope>
    <scope>TISSUE SPECIFICITY</scope>
</reference>
<protein>
    <recommendedName>
        <fullName evidence="1">Deubiquitinase DESI2</fullName>
        <ecNumber evidence="1">3.4.19.12</ecNumber>
    </recommendedName>
    <alternativeName>
        <fullName>Desumoylating isopeptidase 2</fullName>
        <shortName>DeSI-2</shortName>
    </alternativeName>
    <alternativeName>
        <fullName>PPPDE peptidase domain-containing protein 1</fullName>
    </alternativeName>
    <alternativeName>
        <fullName>Palmitoyl protein thioesterase DESI2</fullName>
        <ecNumber evidence="1">3.1.2.22</ecNumber>
    </alternativeName>
    <alternativeName>
        <fullName>Protein FAM152A</fullName>
    </alternativeName>
    <alternativeName>
        <fullName>S-depalmitoylase DESI2</fullName>
    </alternativeName>
</protein>